<keyword id="KW-0066">ATP synthesis</keyword>
<keyword id="KW-0138">CF(0)</keyword>
<keyword id="KW-0150">Chloroplast</keyword>
<keyword id="KW-0375">Hydrogen ion transport</keyword>
<keyword id="KW-0406">Ion transport</keyword>
<keyword id="KW-0446">Lipid-binding</keyword>
<keyword id="KW-0472">Membrane</keyword>
<keyword id="KW-0934">Plastid</keyword>
<keyword id="KW-0793">Thylakoid</keyword>
<keyword id="KW-0812">Transmembrane</keyword>
<keyword id="KW-1133">Transmembrane helix</keyword>
<keyword id="KW-0813">Transport</keyword>
<protein>
    <recommendedName>
        <fullName evidence="1">ATP synthase subunit c, chloroplastic</fullName>
    </recommendedName>
    <alternativeName>
        <fullName evidence="1">ATP synthase F(0) sector subunit c</fullName>
    </alternativeName>
    <alternativeName>
        <fullName evidence="1">ATPase subunit III</fullName>
    </alternativeName>
    <alternativeName>
        <fullName evidence="1">F-type ATPase subunit c</fullName>
        <shortName evidence="1">F-ATPase subunit c</shortName>
    </alternativeName>
    <alternativeName>
        <fullName evidence="1">Lipid-binding protein</fullName>
    </alternativeName>
</protein>
<feature type="chain" id="PRO_0000362966" description="ATP synthase subunit c, chloroplastic">
    <location>
        <begin position="1"/>
        <end position="81"/>
    </location>
</feature>
<feature type="transmembrane region" description="Helical" evidence="1">
    <location>
        <begin position="7"/>
        <end position="27"/>
    </location>
</feature>
<feature type="transmembrane region" description="Helical" evidence="1">
    <location>
        <begin position="57"/>
        <end position="77"/>
    </location>
</feature>
<feature type="site" description="Reversibly protonated during proton transport" evidence="1">
    <location>
        <position position="61"/>
    </location>
</feature>
<gene>
    <name evidence="1" type="primary">atpH</name>
</gene>
<reference key="1">
    <citation type="journal article" date="2007" name="Proc. Natl. Acad. Sci. U.S.A.">
        <title>Analysis of 81 genes from 64 plastid genomes resolves relationships in angiosperms and identifies genome-scale evolutionary patterns.</title>
        <authorList>
            <person name="Jansen R.K."/>
            <person name="Cai Z."/>
            <person name="Raubeson L.A."/>
            <person name="Daniell H."/>
            <person name="dePamphilis C.W."/>
            <person name="Leebens-Mack J."/>
            <person name="Muller K.F."/>
            <person name="Guisinger-Bellian M."/>
            <person name="Haberle R.C."/>
            <person name="Hansen A.K."/>
            <person name="Chumley T.W."/>
            <person name="Lee S.B."/>
            <person name="Peery R."/>
            <person name="McNeal J.R."/>
            <person name="Kuehl J.V."/>
            <person name="Boore J.L."/>
        </authorList>
    </citation>
    <scope>NUCLEOTIDE SEQUENCE [GENOMIC DNA]</scope>
</reference>
<reference key="2">
    <citation type="journal article" date="2008" name="J. Mol. Evol.">
        <title>Extensive rearrangements in the chloroplast genome of Trachelium caeruleum are associated with repeats and tRNA genes.</title>
        <authorList>
            <person name="Haberle R.C."/>
            <person name="Fourcade H.M."/>
            <person name="Boore J.L."/>
            <person name="Jansen R.K."/>
        </authorList>
    </citation>
    <scope>NUCLEOTIDE SEQUENCE [LARGE SCALE GENOMIC DNA]</scope>
</reference>
<dbReference type="EMBL" id="EU017218">
    <property type="protein sequence ID" value="ABU85629.1"/>
    <property type="molecule type" value="Genomic_DNA"/>
</dbReference>
<dbReference type="EMBL" id="EU090187">
    <property type="protein sequence ID" value="ABV26470.1"/>
    <property type="molecule type" value="Genomic_DNA"/>
</dbReference>
<dbReference type="RefSeq" id="YP_001718645.1">
    <property type="nucleotide sequence ID" value="NC_010442.1"/>
</dbReference>
<dbReference type="SMR" id="A9QC36"/>
<dbReference type="GeneID" id="6156001"/>
<dbReference type="GO" id="GO:0009535">
    <property type="term" value="C:chloroplast thylakoid membrane"/>
    <property type="evidence" value="ECO:0007669"/>
    <property type="project" value="UniProtKB-SubCell"/>
</dbReference>
<dbReference type="GO" id="GO:0045259">
    <property type="term" value="C:proton-transporting ATP synthase complex"/>
    <property type="evidence" value="ECO:0007669"/>
    <property type="project" value="UniProtKB-KW"/>
</dbReference>
<dbReference type="GO" id="GO:0033177">
    <property type="term" value="C:proton-transporting two-sector ATPase complex, proton-transporting domain"/>
    <property type="evidence" value="ECO:0007669"/>
    <property type="project" value="InterPro"/>
</dbReference>
<dbReference type="GO" id="GO:0008289">
    <property type="term" value="F:lipid binding"/>
    <property type="evidence" value="ECO:0007669"/>
    <property type="project" value="UniProtKB-KW"/>
</dbReference>
<dbReference type="GO" id="GO:0046933">
    <property type="term" value="F:proton-transporting ATP synthase activity, rotational mechanism"/>
    <property type="evidence" value="ECO:0007669"/>
    <property type="project" value="UniProtKB-UniRule"/>
</dbReference>
<dbReference type="CDD" id="cd18183">
    <property type="entry name" value="ATP-synt_Fo_c_ATPH"/>
    <property type="match status" value="1"/>
</dbReference>
<dbReference type="FunFam" id="1.20.20.10:FF:000001">
    <property type="entry name" value="ATP synthase subunit c, chloroplastic"/>
    <property type="match status" value="1"/>
</dbReference>
<dbReference type="Gene3D" id="1.20.20.10">
    <property type="entry name" value="F1F0 ATP synthase subunit C"/>
    <property type="match status" value="1"/>
</dbReference>
<dbReference type="HAMAP" id="MF_01396">
    <property type="entry name" value="ATP_synth_c_bact"/>
    <property type="match status" value="1"/>
</dbReference>
<dbReference type="InterPro" id="IPR005953">
    <property type="entry name" value="ATP_synth_csu_bac/chlpt"/>
</dbReference>
<dbReference type="InterPro" id="IPR000454">
    <property type="entry name" value="ATP_synth_F0_csu"/>
</dbReference>
<dbReference type="InterPro" id="IPR020537">
    <property type="entry name" value="ATP_synth_F0_csu_DDCD_BS"/>
</dbReference>
<dbReference type="InterPro" id="IPR038662">
    <property type="entry name" value="ATP_synth_F0_csu_sf"/>
</dbReference>
<dbReference type="InterPro" id="IPR002379">
    <property type="entry name" value="ATPase_proteolipid_c-like_dom"/>
</dbReference>
<dbReference type="InterPro" id="IPR035921">
    <property type="entry name" value="F/V-ATP_Csub_sf"/>
</dbReference>
<dbReference type="NCBIfam" id="TIGR01260">
    <property type="entry name" value="ATP_synt_c"/>
    <property type="match status" value="1"/>
</dbReference>
<dbReference type="NCBIfam" id="NF005608">
    <property type="entry name" value="PRK07354.1"/>
    <property type="match status" value="1"/>
</dbReference>
<dbReference type="PANTHER" id="PTHR10031">
    <property type="entry name" value="ATP SYNTHASE LIPID-BINDING PROTEIN, MITOCHONDRIAL"/>
    <property type="match status" value="1"/>
</dbReference>
<dbReference type="PANTHER" id="PTHR10031:SF0">
    <property type="entry name" value="ATPASE PROTEIN 9"/>
    <property type="match status" value="1"/>
</dbReference>
<dbReference type="Pfam" id="PF00137">
    <property type="entry name" value="ATP-synt_C"/>
    <property type="match status" value="1"/>
</dbReference>
<dbReference type="PRINTS" id="PR00124">
    <property type="entry name" value="ATPASEC"/>
</dbReference>
<dbReference type="SUPFAM" id="SSF81333">
    <property type="entry name" value="F1F0 ATP synthase subunit C"/>
    <property type="match status" value="1"/>
</dbReference>
<dbReference type="PROSITE" id="PS00605">
    <property type="entry name" value="ATPASE_C"/>
    <property type="match status" value="1"/>
</dbReference>
<name>ATPH_TRACE</name>
<sequence length="81" mass="8004">MNPLISAASVIAAGLAVGLASIGPGIGQGTAAGQAVEGIARQPEAEGKIRGTLLLSLAFMEALTIYGLVVALALLFANPFV</sequence>
<proteinExistence type="inferred from homology"/>
<accession>A9QC36</accession>
<organism>
    <name type="scientific">Trachelium caeruleum</name>
    <name type="common">Blue throatwort</name>
    <dbReference type="NCBI Taxonomy" id="28494"/>
    <lineage>
        <taxon>Eukaryota</taxon>
        <taxon>Viridiplantae</taxon>
        <taxon>Streptophyta</taxon>
        <taxon>Embryophyta</taxon>
        <taxon>Tracheophyta</taxon>
        <taxon>Spermatophyta</taxon>
        <taxon>Magnoliopsida</taxon>
        <taxon>eudicotyledons</taxon>
        <taxon>Gunneridae</taxon>
        <taxon>Pentapetalae</taxon>
        <taxon>asterids</taxon>
        <taxon>campanulids</taxon>
        <taxon>Asterales</taxon>
        <taxon>Campanulaceae</taxon>
        <taxon>Trachelium</taxon>
    </lineage>
</organism>
<evidence type="ECO:0000255" key="1">
    <source>
        <dbReference type="HAMAP-Rule" id="MF_01396"/>
    </source>
</evidence>
<geneLocation type="chloroplast"/>
<comment type="function">
    <text evidence="1">F(1)F(0) ATP synthase produces ATP from ADP in the presence of a proton or sodium gradient. F-type ATPases consist of two structural domains, F(1) containing the extramembraneous catalytic core and F(0) containing the membrane proton channel, linked together by a central stalk and a peripheral stalk. During catalysis, ATP synthesis in the catalytic domain of F(1) is coupled via a rotary mechanism of the central stalk subunits to proton translocation.</text>
</comment>
<comment type="function">
    <text evidence="1">Key component of the F(0) channel; it plays a direct role in translocation across the membrane. A homomeric c-ring of between 10-14 subunits forms the central stalk rotor element with the F(1) delta and epsilon subunits.</text>
</comment>
<comment type="subunit">
    <text evidence="1">F-type ATPases have 2 components, F(1) - the catalytic core - and F(0) - the membrane proton channel. F(1) has five subunits: alpha(3), beta(3), gamma(1), delta(1), epsilon(1). F(0) has four main subunits: a(1), b(1), b'(1) and c(10-14). The alpha and beta chains form an alternating ring which encloses part of the gamma chain. F(1) is attached to F(0) by a central stalk formed by the gamma and epsilon chains, while a peripheral stalk is formed by the delta, b and b' chains.</text>
</comment>
<comment type="subcellular location">
    <subcellularLocation>
        <location evidence="1">Plastid</location>
        <location evidence="1">Chloroplast thylakoid membrane</location>
        <topology evidence="1">Multi-pass membrane protein</topology>
    </subcellularLocation>
</comment>
<comment type="miscellaneous">
    <text>In plastids the F-type ATPase is also known as CF(1)CF(0).</text>
</comment>
<comment type="similarity">
    <text evidence="1">Belongs to the ATPase C chain family.</text>
</comment>